<feature type="chain" id="PRO_1000200990" description="Cell division activator CedA">
    <location>
        <begin position="1"/>
        <end position="80"/>
    </location>
</feature>
<keyword id="KW-0131">Cell cycle</keyword>
<keyword id="KW-0132">Cell division</keyword>
<keyword id="KW-0238">DNA-binding</keyword>
<gene>
    <name evidence="1" type="primary">cedA</name>
    <name type="ordered locus">SeD_A2025</name>
</gene>
<comment type="function">
    <text evidence="1">Activates the cell division inhibited by chromosomal DNA over-replication.</text>
</comment>
<comment type="similarity">
    <text evidence="1">Belongs to the CedA family.</text>
</comment>
<reference key="1">
    <citation type="journal article" date="2011" name="J. Bacteriol.">
        <title>Comparative genomics of 28 Salmonella enterica isolates: evidence for CRISPR-mediated adaptive sublineage evolution.</title>
        <authorList>
            <person name="Fricke W.F."/>
            <person name="Mammel M.K."/>
            <person name="McDermott P.F."/>
            <person name="Tartera C."/>
            <person name="White D.G."/>
            <person name="Leclerc J.E."/>
            <person name="Ravel J."/>
            <person name="Cebula T.A."/>
        </authorList>
    </citation>
    <scope>NUCLEOTIDE SEQUENCE [LARGE SCALE GENOMIC DNA]</scope>
    <source>
        <strain>CT_02021853</strain>
    </source>
</reference>
<dbReference type="EMBL" id="CP001144">
    <property type="protein sequence ID" value="ACH74606.1"/>
    <property type="molecule type" value="Genomic_DNA"/>
</dbReference>
<dbReference type="RefSeq" id="WP_000977510.1">
    <property type="nucleotide sequence ID" value="NC_011205.1"/>
</dbReference>
<dbReference type="SMR" id="B5FJC0"/>
<dbReference type="KEGG" id="sed:SeD_A2025"/>
<dbReference type="HOGENOM" id="CLU_167445_0_0_6"/>
<dbReference type="Proteomes" id="UP000008322">
    <property type="component" value="Chromosome"/>
</dbReference>
<dbReference type="GO" id="GO:0003677">
    <property type="term" value="F:DNA binding"/>
    <property type="evidence" value="ECO:0007669"/>
    <property type="project" value="UniProtKB-UniRule"/>
</dbReference>
<dbReference type="GO" id="GO:0051301">
    <property type="term" value="P:cell division"/>
    <property type="evidence" value="ECO:0007669"/>
    <property type="project" value="UniProtKB-UniRule"/>
</dbReference>
<dbReference type="Gene3D" id="3.30.730.20">
    <property type="entry name" value="Cell division activator CedA"/>
    <property type="match status" value="1"/>
</dbReference>
<dbReference type="HAMAP" id="MF_01580">
    <property type="entry name" value="CedA"/>
    <property type="match status" value="1"/>
</dbReference>
<dbReference type="InterPro" id="IPR038463">
    <property type="entry name" value="CedA-like_sf"/>
</dbReference>
<dbReference type="InterPro" id="IPR019666">
    <property type="entry name" value="Cell_div_activator_CedA"/>
</dbReference>
<dbReference type="NCBIfam" id="NF007510">
    <property type="entry name" value="PRK10113.1"/>
    <property type="match status" value="1"/>
</dbReference>
<dbReference type="Pfam" id="PF10729">
    <property type="entry name" value="CedA"/>
    <property type="match status" value="1"/>
</dbReference>
<organism>
    <name type="scientific">Salmonella dublin (strain CT_02021853)</name>
    <dbReference type="NCBI Taxonomy" id="439851"/>
    <lineage>
        <taxon>Bacteria</taxon>
        <taxon>Pseudomonadati</taxon>
        <taxon>Pseudomonadota</taxon>
        <taxon>Gammaproteobacteria</taxon>
        <taxon>Enterobacterales</taxon>
        <taxon>Enterobacteriaceae</taxon>
        <taxon>Salmonella</taxon>
    </lineage>
</organism>
<protein>
    <recommendedName>
        <fullName evidence="1">Cell division activator CedA</fullName>
    </recommendedName>
</protein>
<accession>B5FJC0</accession>
<sequence>MMKPLRQQNRQIISYIPRVEPAPPEHAIKMDTFRDVWILRGKYVAFVLTGESFQRSPAFSVPESAQRWANQVRQENEIAD</sequence>
<proteinExistence type="inferred from homology"/>
<evidence type="ECO:0000255" key="1">
    <source>
        <dbReference type="HAMAP-Rule" id="MF_01580"/>
    </source>
</evidence>
<name>CEDA_SALDC</name>